<feature type="chain" id="PRO_0000145979" description="Phosphoglycerate kinase">
    <location>
        <begin position="1"/>
        <end position="398"/>
    </location>
</feature>
<feature type="binding site" evidence="1">
    <location>
        <begin position="20"/>
        <end position="22"/>
    </location>
    <ligand>
        <name>substrate</name>
    </ligand>
</feature>
<feature type="binding site" evidence="1">
    <location>
        <position position="35"/>
    </location>
    <ligand>
        <name>substrate</name>
    </ligand>
</feature>
<feature type="binding site" evidence="1">
    <location>
        <begin position="58"/>
        <end position="61"/>
    </location>
    <ligand>
        <name>substrate</name>
    </ligand>
</feature>
<feature type="binding site" evidence="1">
    <location>
        <position position="118"/>
    </location>
    <ligand>
        <name>substrate</name>
    </ligand>
</feature>
<feature type="binding site" evidence="1">
    <location>
        <position position="155"/>
    </location>
    <ligand>
        <name>substrate</name>
    </ligand>
</feature>
<feature type="binding site" evidence="1">
    <location>
        <position position="206"/>
    </location>
    <ligand>
        <name>ATP</name>
        <dbReference type="ChEBI" id="CHEBI:30616"/>
    </ligand>
</feature>
<feature type="binding site" evidence="1">
    <location>
        <position position="295"/>
    </location>
    <ligand>
        <name>ATP</name>
        <dbReference type="ChEBI" id="CHEBI:30616"/>
    </ligand>
</feature>
<feature type="binding site" evidence="1">
    <location>
        <position position="326"/>
    </location>
    <ligand>
        <name>ATP</name>
        <dbReference type="ChEBI" id="CHEBI:30616"/>
    </ligand>
</feature>
<feature type="binding site" evidence="1">
    <location>
        <begin position="354"/>
        <end position="357"/>
    </location>
    <ligand>
        <name>ATP</name>
        <dbReference type="ChEBI" id="CHEBI:30616"/>
    </ligand>
</feature>
<evidence type="ECO:0000255" key="1">
    <source>
        <dbReference type="HAMAP-Rule" id="MF_00145"/>
    </source>
</evidence>
<protein>
    <recommendedName>
        <fullName evidence="1">Phosphoglycerate kinase</fullName>
        <ecNumber evidence="1">2.7.2.3</ecNumber>
    </recommendedName>
</protein>
<name>PGK_ONYPE</name>
<accession>P62417</accession>
<sequence length="398" mass="43522">MTKSLTNMNITNKKVLLRADLNVPLENSVITDDNRIKAILPTLKYLVQQKAKVIIFSHLGRVKTEADKAHFSLQVVAEKIAFYLQQKLKFVPETQGNTLNQAVGQMLPGDVLVVQNTRFEDVPFKKESKNDPELGKYWASLGDVFVNDAFGTCHRTHASNVGIATYIKEKCFGFLVEKEISFLKKIVQTPQRPLVAVLGGSKVSDKIGVIRSLLQKVDVLLIGGGMSYTCLKAKCFNIGTSLLEADKIPLVKELLASPEGKKIVLPKDFVCGKEFSPTTQAAVYSYDNISDDVMGLDIGPQTIELFKTYLQTAQTVVWNGPVGVFEFEQFSKGTKALAETISNLSPNTTTIIGGGDSAAAVFKFGLDQNFSHISTGGGAFLEFLEGKPMPGLACMEKL</sequence>
<comment type="catalytic activity">
    <reaction evidence="1">
        <text>(2R)-3-phosphoglycerate + ATP = (2R)-3-phospho-glyceroyl phosphate + ADP</text>
        <dbReference type="Rhea" id="RHEA:14801"/>
        <dbReference type="ChEBI" id="CHEBI:30616"/>
        <dbReference type="ChEBI" id="CHEBI:57604"/>
        <dbReference type="ChEBI" id="CHEBI:58272"/>
        <dbReference type="ChEBI" id="CHEBI:456216"/>
        <dbReference type="EC" id="2.7.2.3"/>
    </reaction>
</comment>
<comment type="pathway">
    <text evidence="1">Carbohydrate degradation; glycolysis; pyruvate from D-glyceraldehyde 3-phosphate: step 2/5.</text>
</comment>
<comment type="subunit">
    <text evidence="1">Monomer.</text>
</comment>
<comment type="subcellular location">
    <subcellularLocation>
        <location evidence="1">Cytoplasm</location>
    </subcellularLocation>
</comment>
<comment type="similarity">
    <text evidence="1">Belongs to the phosphoglycerate kinase family.</text>
</comment>
<dbReference type="EC" id="2.7.2.3" evidence="1"/>
<dbReference type="EMBL" id="AP006628">
    <property type="protein sequence ID" value="BAD04259.1"/>
    <property type="molecule type" value="Genomic_DNA"/>
</dbReference>
<dbReference type="SMR" id="P62417"/>
<dbReference type="STRING" id="262768.PAM_174"/>
<dbReference type="KEGG" id="poy:PAM_174"/>
<dbReference type="eggNOG" id="COG0126">
    <property type="taxonomic scope" value="Bacteria"/>
</dbReference>
<dbReference type="HOGENOM" id="CLU_025427_0_2_14"/>
<dbReference type="BioCyc" id="OYEL262768:G1G26-213-MONOMER"/>
<dbReference type="UniPathway" id="UPA00109">
    <property type="reaction ID" value="UER00185"/>
</dbReference>
<dbReference type="Proteomes" id="UP000002523">
    <property type="component" value="Chromosome"/>
</dbReference>
<dbReference type="GO" id="GO:0005829">
    <property type="term" value="C:cytosol"/>
    <property type="evidence" value="ECO:0007669"/>
    <property type="project" value="TreeGrafter"/>
</dbReference>
<dbReference type="GO" id="GO:0043531">
    <property type="term" value="F:ADP binding"/>
    <property type="evidence" value="ECO:0007669"/>
    <property type="project" value="TreeGrafter"/>
</dbReference>
<dbReference type="GO" id="GO:0005524">
    <property type="term" value="F:ATP binding"/>
    <property type="evidence" value="ECO:0007669"/>
    <property type="project" value="UniProtKB-KW"/>
</dbReference>
<dbReference type="GO" id="GO:0004618">
    <property type="term" value="F:phosphoglycerate kinase activity"/>
    <property type="evidence" value="ECO:0007669"/>
    <property type="project" value="UniProtKB-UniRule"/>
</dbReference>
<dbReference type="GO" id="GO:0006094">
    <property type="term" value="P:gluconeogenesis"/>
    <property type="evidence" value="ECO:0007669"/>
    <property type="project" value="TreeGrafter"/>
</dbReference>
<dbReference type="GO" id="GO:0006096">
    <property type="term" value="P:glycolytic process"/>
    <property type="evidence" value="ECO:0007669"/>
    <property type="project" value="UniProtKB-UniRule"/>
</dbReference>
<dbReference type="FunFam" id="3.40.50.1260:FF:000007">
    <property type="entry name" value="Phosphoglycerate kinase"/>
    <property type="match status" value="1"/>
</dbReference>
<dbReference type="FunFam" id="3.40.50.1260:FF:000008">
    <property type="entry name" value="Phosphoglycerate kinase"/>
    <property type="match status" value="1"/>
</dbReference>
<dbReference type="Gene3D" id="3.40.50.1260">
    <property type="entry name" value="Phosphoglycerate kinase, N-terminal domain"/>
    <property type="match status" value="2"/>
</dbReference>
<dbReference type="HAMAP" id="MF_00145">
    <property type="entry name" value="Phosphoglyc_kinase"/>
    <property type="match status" value="1"/>
</dbReference>
<dbReference type="InterPro" id="IPR001576">
    <property type="entry name" value="Phosphoglycerate_kinase"/>
</dbReference>
<dbReference type="InterPro" id="IPR015911">
    <property type="entry name" value="Phosphoglycerate_kinase_CS"/>
</dbReference>
<dbReference type="InterPro" id="IPR015824">
    <property type="entry name" value="Phosphoglycerate_kinase_N"/>
</dbReference>
<dbReference type="InterPro" id="IPR036043">
    <property type="entry name" value="Phosphoglycerate_kinase_sf"/>
</dbReference>
<dbReference type="PANTHER" id="PTHR11406">
    <property type="entry name" value="PHOSPHOGLYCERATE KINASE"/>
    <property type="match status" value="1"/>
</dbReference>
<dbReference type="PANTHER" id="PTHR11406:SF23">
    <property type="entry name" value="PHOSPHOGLYCERATE KINASE 1, CHLOROPLASTIC-RELATED"/>
    <property type="match status" value="1"/>
</dbReference>
<dbReference type="Pfam" id="PF00162">
    <property type="entry name" value="PGK"/>
    <property type="match status" value="1"/>
</dbReference>
<dbReference type="PIRSF" id="PIRSF000724">
    <property type="entry name" value="Pgk"/>
    <property type="match status" value="1"/>
</dbReference>
<dbReference type="PRINTS" id="PR00477">
    <property type="entry name" value="PHGLYCKINASE"/>
</dbReference>
<dbReference type="SUPFAM" id="SSF53748">
    <property type="entry name" value="Phosphoglycerate kinase"/>
    <property type="match status" value="1"/>
</dbReference>
<dbReference type="PROSITE" id="PS00111">
    <property type="entry name" value="PGLYCERATE_KINASE"/>
    <property type="match status" value="1"/>
</dbReference>
<proteinExistence type="inferred from homology"/>
<organism>
    <name type="scientific">Onion yellows phytoplasma (strain OY-M)</name>
    <dbReference type="NCBI Taxonomy" id="262768"/>
    <lineage>
        <taxon>Bacteria</taxon>
        <taxon>Bacillati</taxon>
        <taxon>Mycoplasmatota</taxon>
        <taxon>Mollicutes</taxon>
        <taxon>Acholeplasmatales</taxon>
        <taxon>Acholeplasmataceae</taxon>
        <taxon>Candidatus Phytoplasma</taxon>
        <taxon>16SrI (Aster yellows group)</taxon>
    </lineage>
</organism>
<keyword id="KW-0067">ATP-binding</keyword>
<keyword id="KW-0963">Cytoplasm</keyword>
<keyword id="KW-0324">Glycolysis</keyword>
<keyword id="KW-0418">Kinase</keyword>
<keyword id="KW-0547">Nucleotide-binding</keyword>
<keyword id="KW-0808">Transferase</keyword>
<reference key="1">
    <citation type="journal article" date="2004" name="Nat. Genet.">
        <title>Reductive evolution suggested from the complete genome sequence of a plant-pathogenic phytoplasma.</title>
        <authorList>
            <person name="Oshima K."/>
            <person name="Kakizawa S."/>
            <person name="Nishigawa H."/>
            <person name="Jung H.-Y."/>
            <person name="Wei W."/>
            <person name="Suzuki S."/>
            <person name="Arashida R."/>
            <person name="Nakata D."/>
            <person name="Miyata S."/>
            <person name="Ugaki M."/>
            <person name="Namba S."/>
        </authorList>
    </citation>
    <scope>NUCLEOTIDE SEQUENCE [LARGE SCALE GENOMIC DNA]</scope>
    <source>
        <strain>OY-M</strain>
    </source>
</reference>
<gene>
    <name evidence="1" type="primary">pgk</name>
    <name type="ordered locus">PAM_174</name>
</gene>